<organism>
    <name type="scientific">Bos taurus</name>
    <name type="common">Bovine</name>
    <dbReference type="NCBI Taxonomy" id="9913"/>
    <lineage>
        <taxon>Eukaryota</taxon>
        <taxon>Metazoa</taxon>
        <taxon>Chordata</taxon>
        <taxon>Craniata</taxon>
        <taxon>Vertebrata</taxon>
        <taxon>Euteleostomi</taxon>
        <taxon>Mammalia</taxon>
        <taxon>Eutheria</taxon>
        <taxon>Laurasiatheria</taxon>
        <taxon>Artiodactyla</taxon>
        <taxon>Ruminantia</taxon>
        <taxon>Pecora</taxon>
        <taxon>Bovidae</taxon>
        <taxon>Bovinae</taxon>
        <taxon>Bos</taxon>
    </lineage>
</organism>
<accession>Q1LZ89</accession>
<reference key="1">
    <citation type="submission" date="2006-05" db="EMBL/GenBank/DDBJ databases">
        <authorList>
            <consortium name="NIH - Mammalian Gene Collection (MGC) project"/>
        </authorList>
    </citation>
    <scope>NUCLEOTIDE SEQUENCE [LARGE SCALE MRNA]</scope>
    <source>
        <strain>Hereford</strain>
        <tissue>Ascending colon</tissue>
    </source>
</reference>
<keyword id="KW-0175">Coiled coil</keyword>
<keyword id="KW-0539">Nucleus</keyword>
<keyword id="KW-0597">Phosphoprotein</keyword>
<keyword id="KW-1185">Reference proteome</keyword>
<dbReference type="EMBL" id="BC116140">
    <property type="protein sequence ID" value="AAI16141.1"/>
    <property type="molecule type" value="mRNA"/>
</dbReference>
<dbReference type="RefSeq" id="NP_001073803.1">
    <property type="nucleotide sequence ID" value="NM_001080334.1"/>
</dbReference>
<dbReference type="RefSeq" id="XP_010813795.1">
    <property type="nucleotide sequence ID" value="XM_010815493.2"/>
</dbReference>
<dbReference type="RefSeq" id="XP_015313871.1">
    <property type="nucleotide sequence ID" value="XM_015458385.1"/>
</dbReference>
<dbReference type="RefSeq" id="XP_059732947.1">
    <property type="nucleotide sequence ID" value="XM_059876964.1"/>
</dbReference>
<dbReference type="RefSeq" id="XP_059732948.1">
    <property type="nucleotide sequence ID" value="XM_059876965.1"/>
</dbReference>
<dbReference type="RefSeq" id="XP_059732949.1">
    <property type="nucleotide sequence ID" value="XM_059876966.1"/>
</dbReference>
<dbReference type="SMR" id="Q1LZ89"/>
<dbReference type="FunCoup" id="Q1LZ89">
    <property type="interactions" value="1295"/>
</dbReference>
<dbReference type="STRING" id="9913.ENSBTAP00000015303"/>
<dbReference type="PaxDb" id="9913-ENSBTAP00000015303"/>
<dbReference type="Ensembl" id="ENSBTAT00000015303.5">
    <property type="protein sequence ID" value="ENSBTAP00000015303.3"/>
    <property type="gene ID" value="ENSBTAG00000011517.5"/>
</dbReference>
<dbReference type="GeneID" id="618485"/>
<dbReference type="KEGG" id="bta:618485"/>
<dbReference type="CTD" id="29903"/>
<dbReference type="VEuPathDB" id="HostDB:ENSBTAG00000011517"/>
<dbReference type="VGNC" id="VGNC:26831">
    <property type="gene designation" value="CCDC106"/>
</dbReference>
<dbReference type="eggNOG" id="ENOG502RTFM">
    <property type="taxonomic scope" value="Eukaryota"/>
</dbReference>
<dbReference type="GeneTree" id="ENSGT00390000013183"/>
<dbReference type="HOGENOM" id="CLU_069155_0_0_1"/>
<dbReference type="InParanoid" id="Q1LZ89"/>
<dbReference type="OMA" id="CRSKQPP"/>
<dbReference type="OrthoDB" id="8721206at2759"/>
<dbReference type="TreeFam" id="TF331729"/>
<dbReference type="Proteomes" id="UP000009136">
    <property type="component" value="Chromosome 18"/>
</dbReference>
<dbReference type="Bgee" id="ENSBTAG00000011517">
    <property type="expression patterns" value="Expressed in floor plate of diencephalon and 106 other cell types or tissues"/>
</dbReference>
<dbReference type="GO" id="GO:0005829">
    <property type="term" value="C:cytosol"/>
    <property type="evidence" value="ECO:0007669"/>
    <property type="project" value="Ensembl"/>
</dbReference>
<dbReference type="GO" id="GO:0005654">
    <property type="term" value="C:nucleoplasm"/>
    <property type="evidence" value="ECO:0000318"/>
    <property type="project" value="GO_Central"/>
</dbReference>
<dbReference type="InterPro" id="IPR031591">
    <property type="entry name" value="CCDC106"/>
</dbReference>
<dbReference type="PANTHER" id="PTHR16477">
    <property type="entry name" value="COILED-COIL DOMAIN-CONTAINING PROTEIN 106"/>
    <property type="match status" value="1"/>
</dbReference>
<dbReference type="PANTHER" id="PTHR16477:SF2">
    <property type="entry name" value="COILED-COIL DOMAIN-CONTAINING PROTEIN 106"/>
    <property type="match status" value="1"/>
</dbReference>
<dbReference type="Pfam" id="PF15794">
    <property type="entry name" value="CCDC106"/>
    <property type="match status" value="1"/>
</dbReference>
<feature type="chain" id="PRO_0000274342" description="Coiled-coil domain-containing protein 106">
    <location>
        <begin position="1"/>
        <end position="278"/>
    </location>
</feature>
<feature type="region of interest" description="Disordered" evidence="4">
    <location>
        <begin position="102"/>
        <end position="174"/>
    </location>
</feature>
<feature type="coiled-coil region" evidence="3">
    <location>
        <begin position="61"/>
        <end position="99"/>
    </location>
</feature>
<feature type="short sequence motif" description="Bipartite nuclear localization signal" evidence="1">
    <location>
        <begin position="151"/>
        <end position="164"/>
    </location>
</feature>
<feature type="compositionally biased region" description="Basic and acidic residues" evidence="4">
    <location>
        <begin position="102"/>
        <end position="119"/>
    </location>
</feature>
<feature type="compositionally biased region" description="Low complexity" evidence="4">
    <location>
        <begin position="131"/>
        <end position="144"/>
    </location>
</feature>
<feature type="compositionally biased region" description="Basic residues" evidence="4">
    <location>
        <begin position="150"/>
        <end position="166"/>
    </location>
</feature>
<feature type="modified residue" description="Phosphoserine" evidence="2">
    <location>
        <position position="128"/>
    </location>
</feature>
<name>CC106_BOVIN</name>
<gene>
    <name type="primary">CCDC106</name>
</gene>
<sequence length="278" mass="31387">MNSRRRPVKKDSEALEISIPFDETPHLDPQIFYSLSPSRGNFEEPSEAASPTAALMNGVRAQLHLALERNSWLQKRIEDLEEERDFLRCQLDKFISSARLDADDHCRGKPGPRRAEGDGRGGTGGEASDPESAASSLSGASEEGSTVERKRQKQKGGPGRRRFGKPKARERQRVKDADGVLCRYKKILGTFQKLKSMSRAFEHHRVDRNTVALTTPIAELLIVAPEKLAEVGEFDPSKERLLEYSRRCFLALDEETLKKVQALKKSKLLLPITYRFKR</sequence>
<proteinExistence type="evidence at transcript level"/>
<protein>
    <recommendedName>
        <fullName>Coiled-coil domain-containing protein 106</fullName>
    </recommendedName>
</protein>
<evidence type="ECO:0000250" key="1"/>
<evidence type="ECO:0000250" key="2">
    <source>
        <dbReference type="UniProtKB" id="Q9BWC9"/>
    </source>
</evidence>
<evidence type="ECO:0000255" key="3"/>
<evidence type="ECO:0000256" key="4">
    <source>
        <dbReference type="SAM" id="MobiDB-lite"/>
    </source>
</evidence>
<comment type="function">
    <text evidence="1">Promotes the degradation of p53/TP53 protein and inhibits its transactivity.</text>
</comment>
<comment type="subunit">
    <text evidence="1">Interacts with p53/TP53.</text>
</comment>
<comment type="subcellular location">
    <subcellularLocation>
        <location evidence="1">Nucleus</location>
    </subcellularLocation>
    <text evidence="1">Colocalizes with p53/TP53.</text>
</comment>